<organism>
    <name type="scientific">Zobellia galactanivorans (strain DSM 12802 / CCUG 47099 / CIP 106680 / NCIMB 13871 / Dsij)</name>
    <dbReference type="NCBI Taxonomy" id="63186"/>
    <lineage>
        <taxon>Bacteria</taxon>
        <taxon>Pseudomonadati</taxon>
        <taxon>Bacteroidota</taxon>
        <taxon>Flavobacteriia</taxon>
        <taxon>Flavobacteriales</taxon>
        <taxon>Flavobacteriaceae</taxon>
        <taxon>Zobellia</taxon>
    </lineage>
</organism>
<dbReference type="EC" id="3.2.1.178"/>
<dbReference type="EMBL" id="FQ073839">
    <property type="protein sequence ID" value="CBM41183.1"/>
    <property type="molecule type" value="Genomic_DNA"/>
</dbReference>
<dbReference type="EMBL" id="FP476056">
    <property type="protein sequence ID" value="CAZ97514.1"/>
    <property type="molecule type" value="Genomic_DNA"/>
</dbReference>
<dbReference type="RefSeq" id="WP_013994707.1">
    <property type="nucleotide sequence ID" value="NZ_JAUOSS010000015.1"/>
</dbReference>
<dbReference type="SMR" id="D7GXG1"/>
<dbReference type="STRING" id="63186.ZOBELLIA_3376"/>
<dbReference type="CAZy" id="GH16">
    <property type="family name" value="Glycoside Hydrolase Family 16"/>
</dbReference>
<dbReference type="KEGG" id="zga:ZOBELLIA_3376"/>
<dbReference type="PATRIC" id="fig|63186.3.peg.3293"/>
<dbReference type="HOGENOM" id="CLU_053494_0_0_10"/>
<dbReference type="OrthoDB" id="1421570at2"/>
<dbReference type="Proteomes" id="UP000008898">
    <property type="component" value="Chromosome"/>
</dbReference>
<dbReference type="GO" id="GO:0009279">
    <property type="term" value="C:cell outer membrane"/>
    <property type="evidence" value="ECO:0007669"/>
    <property type="project" value="UniProtKB-SubCell"/>
</dbReference>
<dbReference type="GO" id="GO:0004553">
    <property type="term" value="F:hydrolase activity, hydrolyzing O-glycosyl compounds"/>
    <property type="evidence" value="ECO:0007669"/>
    <property type="project" value="InterPro"/>
</dbReference>
<dbReference type="GO" id="GO:0005975">
    <property type="term" value="P:carbohydrate metabolic process"/>
    <property type="evidence" value="ECO:0007669"/>
    <property type="project" value="InterPro"/>
</dbReference>
<dbReference type="Gene3D" id="2.60.120.200">
    <property type="match status" value="1"/>
</dbReference>
<dbReference type="InterPro" id="IPR013320">
    <property type="entry name" value="ConA-like_dom_sf"/>
</dbReference>
<dbReference type="InterPro" id="IPR000757">
    <property type="entry name" value="GH16"/>
</dbReference>
<dbReference type="InterPro" id="IPR050546">
    <property type="entry name" value="Glycosyl_Hydrlase_16"/>
</dbReference>
<dbReference type="PANTHER" id="PTHR10963:SF55">
    <property type="entry name" value="GLYCOSIDE HYDROLASE FAMILY 16 PROTEIN"/>
    <property type="match status" value="1"/>
</dbReference>
<dbReference type="PANTHER" id="PTHR10963">
    <property type="entry name" value="GLYCOSYL HYDROLASE-RELATED"/>
    <property type="match status" value="1"/>
</dbReference>
<dbReference type="SUPFAM" id="SSF49899">
    <property type="entry name" value="Concanavalin A-like lectins/glucanases"/>
    <property type="match status" value="1"/>
</dbReference>
<dbReference type="PROSITE" id="PS51762">
    <property type="entry name" value="GH16_2"/>
    <property type="match status" value="1"/>
</dbReference>
<dbReference type="PROSITE" id="PS51257">
    <property type="entry name" value="PROKAR_LIPOPROTEIN"/>
    <property type="match status" value="1"/>
</dbReference>
<protein>
    <recommendedName>
        <fullName>Beta-porphyranase C</fullName>
        <ecNumber>3.2.1.178</ecNumber>
    </recommendedName>
</protein>
<keyword id="KW-0998">Cell outer membrane</keyword>
<keyword id="KW-0326">Glycosidase</keyword>
<keyword id="KW-0378">Hydrolase</keyword>
<keyword id="KW-0449">Lipoprotein</keyword>
<keyword id="KW-0472">Membrane</keyword>
<keyword id="KW-0564">Palmitate</keyword>
<keyword id="KW-1185">Reference proteome</keyword>
<keyword id="KW-0732">Signal</keyword>
<comment type="function">
    <text evidence="1">Cleaves the sulfated polysaccharide porphyran at the (1-&gt;4) linkages between beta-D-galactopyranose and alpha-L-galactopyranose-6-sulfate, forming mostly the disaccharide alpha-L-galactopyranose-6-sulfate-(1-&gt;3)-beta-D-galactose.</text>
</comment>
<comment type="catalytic activity">
    <reaction>
        <text>Hydrolysis of beta-D-galactopyranose-(1-&gt;4)-alpha-L-galactopyranose-6-sulfate linkages in porphyran.</text>
        <dbReference type="EC" id="3.2.1.178"/>
    </reaction>
</comment>
<comment type="subcellular location">
    <subcellularLocation>
        <location evidence="7">Cell outer membrane</location>
        <topology evidence="4">Lipid-anchor</topology>
    </subcellularLocation>
</comment>
<comment type="similarity">
    <text evidence="7">Belongs to the glycosyl hydrolase 16 family.</text>
</comment>
<sequence length="355" mass="40646">MIKTLKRIPLVFLIAIMACSNSGDNGKDKVEEQEQAQEQGEKKGQGEERDKEDGIDGLQPTFLADQDPKPDDKKWIKVEGVSDEFNDSELDLTKWSPTPEFIWNGQDRGWYGGSRSLFEADNVSVGNGFLRIEGEKFDSPKYSPKDNTDTPPQRRYGGAYVYGKTLAEPGYYIEARMRASKTAMSAAFWLKTETKPCGENLNDGENLEIDIQECVGVFTGELGDEWTKDDWAVNANWDRIFHYNTHRHNSPCNNIGDRQTKGGKANFDKKNSDEFHIYAAYWHADGSKIDFYIDGELEKSITPVIPFKGALRLIMSSNFYDWIEETSAEDMGFNRPLEDRYTQFDWVRVWQLEDL</sequence>
<accession>D7GXG1</accession>
<proteinExistence type="inferred from homology"/>
<name>PORC_ZOBGA</name>
<feature type="signal peptide" evidence="4">
    <location>
        <begin position="1"/>
        <end position="18"/>
    </location>
</feature>
<feature type="chain" id="PRO_0000422022" description="Beta-porphyranase C">
    <location>
        <begin position="19"/>
        <end position="355"/>
    </location>
</feature>
<feature type="domain" description="GH16" evidence="5">
    <location>
        <begin position="71"/>
        <end position="355"/>
    </location>
</feature>
<feature type="region of interest" description="Disordered" evidence="6">
    <location>
        <begin position="22"/>
        <end position="72"/>
    </location>
</feature>
<feature type="compositionally biased region" description="Basic and acidic residues" evidence="6">
    <location>
        <begin position="39"/>
        <end position="54"/>
    </location>
</feature>
<feature type="active site" description="Nucleophile" evidence="3">
    <location>
        <position position="208"/>
    </location>
</feature>
<feature type="active site" description="Proton donor" evidence="3">
    <location>
        <position position="213"/>
    </location>
</feature>
<feature type="binding site" evidence="2">
    <location>
        <position position="110"/>
    </location>
    <ligand>
        <name>substrate</name>
    </ligand>
</feature>
<feature type="binding site" evidence="2">
    <location>
        <position position="208"/>
    </location>
    <ligand>
        <name>substrate</name>
    </ligand>
</feature>
<feature type="binding site" evidence="2">
    <location>
        <position position="213"/>
    </location>
    <ligand>
        <name>substrate</name>
    </ligand>
</feature>
<feature type="lipid moiety-binding region" description="N-palmitoyl cysteine" evidence="4">
    <location>
        <position position="19"/>
    </location>
</feature>
<feature type="lipid moiety-binding region" description="S-diacylglycerol cysteine" evidence="4">
    <location>
        <position position="19"/>
    </location>
</feature>
<evidence type="ECO:0000250" key="1"/>
<evidence type="ECO:0000250" key="2">
    <source>
        <dbReference type="UniProtKB" id="D7GXG0"/>
    </source>
</evidence>
<evidence type="ECO:0000250" key="3">
    <source>
        <dbReference type="UniProtKB" id="G0L322"/>
    </source>
</evidence>
<evidence type="ECO:0000255" key="4">
    <source>
        <dbReference type="PROSITE-ProRule" id="PRU00303"/>
    </source>
</evidence>
<evidence type="ECO:0000255" key="5">
    <source>
        <dbReference type="PROSITE-ProRule" id="PRU01098"/>
    </source>
</evidence>
<evidence type="ECO:0000256" key="6">
    <source>
        <dbReference type="SAM" id="MobiDB-lite"/>
    </source>
</evidence>
<evidence type="ECO:0000305" key="7"/>
<gene>
    <name type="primary">porC</name>
    <name type="ordered locus">zobellia_3376</name>
</gene>
<reference key="1">
    <citation type="journal article" date="2010" name="Nature">
        <title>Transfer of carbohydrate-active enzymes from marine bacteria to Japanese gut microbiota.</title>
        <authorList>
            <person name="Hehemann J.H."/>
            <person name="Correc G."/>
            <person name="Barbeyron T."/>
            <person name="Helbert W."/>
            <person name="Czjzek M."/>
            <person name="Michel G."/>
        </authorList>
    </citation>
    <scope>NUCLEOTIDE SEQUENCE [GENOMIC DNA]</scope>
    <source>
        <strain>DSM 12802 / CCUG 47099 / CIP 106680 / KCTC 12921 / NCIMB 13871 / Dsij</strain>
    </source>
</reference>
<reference key="2">
    <citation type="submission" date="2009-07" db="EMBL/GenBank/DDBJ databases">
        <title>Complete genome sequence of Zobellia galactanivorans Dsij.</title>
        <authorList>
            <consortium name="Genoscope - CEA"/>
        </authorList>
    </citation>
    <scope>NUCLEOTIDE SEQUENCE [LARGE SCALE GENOMIC DNA]</scope>
    <source>
        <strain>DSM 12802 / CCUG 47099 / CIP 106680 / KCTC 12921 / NCIMB 13871 / Dsij</strain>
    </source>
</reference>